<gene>
    <name evidence="7" type="primary">THA8</name>
    <name evidence="6" type="synonym">EMB3123</name>
    <name evidence="10" type="ordered locus">At3g27750</name>
    <name evidence="11" type="ORF">MGF10.16</name>
</gene>
<keyword id="KW-0150">Chloroplast</keyword>
<keyword id="KW-0472">Membrane</keyword>
<keyword id="KW-0507">mRNA processing</keyword>
<keyword id="KW-0508">mRNA splicing</keyword>
<keyword id="KW-0934">Plastid</keyword>
<keyword id="KW-1185">Reference proteome</keyword>
<keyword id="KW-0677">Repeat</keyword>
<keyword id="KW-0694">RNA-binding</keyword>
<keyword id="KW-0793">Thylakoid</keyword>
<keyword id="KW-0809">Transit peptide</keyword>
<evidence type="ECO:0000255" key="1"/>
<evidence type="ECO:0000255" key="2">
    <source>
        <dbReference type="PROSITE-ProRule" id="PRU00708"/>
    </source>
</evidence>
<evidence type="ECO:0000269" key="3">
    <source>
    </source>
</evidence>
<evidence type="ECO:0000269" key="4">
    <source>
    </source>
</evidence>
<evidence type="ECO:0000269" key="5">
    <source>
    </source>
</evidence>
<evidence type="ECO:0000303" key="6">
    <source>
    </source>
</evidence>
<evidence type="ECO:0000303" key="7">
    <source>
    </source>
</evidence>
<evidence type="ECO:0000303" key="8">
    <source>
    </source>
</evidence>
<evidence type="ECO:0000305" key="9"/>
<evidence type="ECO:0000312" key="10">
    <source>
        <dbReference type="Araport" id="AT3G27750"/>
    </source>
</evidence>
<evidence type="ECO:0000312" key="11">
    <source>
        <dbReference type="EMBL" id="BAB02699.1"/>
    </source>
</evidence>
<reference key="1">
    <citation type="journal article" date="2000" name="DNA Res.">
        <title>Structural analysis of Arabidopsis thaliana chromosome 3. I. Sequence features of the regions of 4,504,864 bp covered by sixty P1 and TAC clones.</title>
        <authorList>
            <person name="Sato S."/>
            <person name="Nakamura Y."/>
            <person name="Kaneko T."/>
            <person name="Katoh T."/>
            <person name="Asamizu E."/>
            <person name="Tabata S."/>
        </authorList>
    </citation>
    <scope>NUCLEOTIDE SEQUENCE [LARGE SCALE GENOMIC DNA]</scope>
    <source>
        <strain>cv. Columbia</strain>
    </source>
</reference>
<reference key="2">
    <citation type="journal article" date="2017" name="Plant J.">
        <title>Araport11: a complete reannotation of the Arabidopsis thaliana reference genome.</title>
        <authorList>
            <person name="Cheng C.Y."/>
            <person name="Krishnakumar V."/>
            <person name="Chan A.P."/>
            <person name="Thibaud-Nissen F."/>
            <person name="Schobel S."/>
            <person name="Town C.D."/>
        </authorList>
    </citation>
    <scope>GENOME REANNOTATION</scope>
    <source>
        <strain>cv. Columbia</strain>
    </source>
</reference>
<reference key="3">
    <citation type="journal article" date="2005" name="Plant Physiol.">
        <title>Analysis of the cDNAs of hypothetical genes on Arabidopsis chromosome 2 reveals numerous transcript variants.</title>
        <authorList>
            <person name="Xiao Y.-L."/>
            <person name="Smith S.R."/>
            <person name="Ishmael N."/>
            <person name="Redman J.C."/>
            <person name="Kumar N."/>
            <person name="Monaghan E.L."/>
            <person name="Ayele M."/>
            <person name="Haas B.J."/>
            <person name="Wu H.C."/>
            <person name="Town C.D."/>
        </authorList>
    </citation>
    <scope>NUCLEOTIDE SEQUENCE [LARGE SCALE MRNA]</scope>
    <source>
        <strain>cv. Columbia</strain>
    </source>
</reference>
<reference key="4">
    <citation type="submission" date="2005-02" db="EMBL/GenBank/DDBJ databases">
        <authorList>
            <person name="Underwood B.A."/>
            <person name="Xiao Y.-L."/>
            <person name="Moskal W.A. Jr."/>
            <person name="Monaghan E.L."/>
            <person name="Wang W."/>
            <person name="Redman J.C."/>
            <person name="Wu H.C."/>
            <person name="Utterback T."/>
            <person name="Town C.D."/>
        </authorList>
    </citation>
    <scope>NUCLEOTIDE SEQUENCE [LARGE SCALE GENOMIC DNA]</scope>
    <source>
        <strain>cv. Columbia</strain>
    </source>
</reference>
<reference key="5">
    <citation type="journal article" date="2004" name="Plant Physiol.">
        <title>Identification of genes required for embryo development in Arabidopsis.</title>
        <authorList>
            <person name="Tzafrir I."/>
            <person name="Pena-Muralla R."/>
            <person name="Dickerman A."/>
            <person name="Berg M."/>
            <person name="Rogers R."/>
            <person name="Hutchens S."/>
            <person name="Sweeney T.C."/>
            <person name="McElver J."/>
            <person name="Aux G."/>
            <person name="Patton D."/>
            <person name="Meinke D."/>
        </authorList>
    </citation>
    <scope>IDENTIFICATION [LARGE SCALE ANALYSIS]</scope>
    <scope>FUNCTION [LARGE SCALE ANALYSIS]</scope>
    <scope>DISRUPTION PHENOTYPE [LARGE SCALE ANALYSIS]</scope>
    <source>
        <strain>cv. Columbia</strain>
        <strain>cv. No-0</strain>
    </source>
</reference>
<reference key="6">
    <citation type="journal article" date="2012" name="RNA">
        <title>A short PPR protein required for the splicing of specific group II introns in angiosperm chloroplasts.</title>
        <authorList>
            <person name="Khrouchtchova A."/>
            <person name="Monde R.-A."/>
            <person name="Barkan A."/>
        </authorList>
    </citation>
    <scope>FUNCTION</scope>
    <scope>DISRUPTION PHENOTYPE</scope>
    <scope>SUBCELLULAR LOCATION</scope>
    <source>
        <strain>cv. Columbia</strain>
        <strain>cv. Landsberg erecta</strain>
    </source>
</reference>
<reference key="7">
    <citation type="journal article" date="2013" name="J. Biol. Chem.">
        <title>Structure of a PLS-class pentatricopeptide repeat protein provides insights into mechanism of RNA recognition.</title>
        <authorList>
            <person name="Ban T."/>
            <person name="Ke J."/>
            <person name="Chen R."/>
            <person name="Gu X."/>
            <person name="Tan M.H.E."/>
            <person name="Zhou X.E."/>
            <person name="Kang Y."/>
            <person name="Melcher K."/>
            <person name="Zhu J.-K."/>
            <person name="Xu H.E."/>
        </authorList>
    </citation>
    <scope>FUNCTION</scope>
</reference>
<comment type="function">
    <text evidence="3 4 5">Essential protein required during embryogenesis (PubMed:15266054, PubMed:22495966). Mediates group II organellar RNA introns splicing (e.g. ycf3-2 and trnA) (PubMed:22495966). Binds weakly to specific RNA (PubMed:22495966, PubMed:24047899). Promotes the biogenesis of chloroplast thylakoid membranes (PubMed:22495966).</text>
</comment>
<comment type="subcellular location">
    <subcellularLocation>
        <location evidence="4">Plastid</location>
        <location evidence="4">Chloroplast thylakoid membrane</location>
        <topology evidence="4">Peripheral membrane protein</topology>
        <orientation evidence="4">Stromal side</orientation>
    </subcellularLocation>
</comment>
<comment type="disruption phenotype">
    <text evidence="3 4">Pigment defective embryo arrested at cotyledon stage in homozygous plants, partially rescued when grown on sucrose-containing medium (PubMed:15266054, PubMed:22495966). Retarded growth and greening. Reduced abundance of both the excised intron and the spliced product from ycf3-2 and trnA (PubMed:22495966).</text>
</comment>
<comment type="similarity">
    <text evidence="9">Belongs to the PPR family. P subfamily.</text>
</comment>
<comment type="online information" name="Pentatricopeptide repeat proteins">
    <link uri="https://ppr.plantenergy.uwa.edu.au"/>
</comment>
<comment type="online information" name="Seed defective Arabidopsis mutants">
    <link uri="http://seedgenes.org/MutantList"/>
</comment>
<name>THA8_ARATH</name>
<feature type="transit peptide" description="Chloroplast" evidence="1">
    <location>
        <begin position="1"/>
        <end position="32"/>
    </location>
</feature>
<feature type="chain" id="PRO_0000442039" description="Protein THYLAKOID ASSEMBLY 8, chloroplastic" evidence="1">
    <location>
        <begin position="33"/>
        <end position="222"/>
    </location>
</feature>
<feature type="repeat" description="PPR 1" evidence="2">
    <location>
        <begin position="115"/>
        <end position="149"/>
    </location>
</feature>
<feature type="repeat" description="PPR 2" evidence="2">
    <location>
        <begin position="150"/>
        <end position="184"/>
    </location>
</feature>
<protein>
    <recommendedName>
        <fullName evidence="7">Protein THYLAKOID ASSEMBLY 8, chloroplastic</fullName>
        <shortName evidence="7">At-THA8</shortName>
        <shortName evidence="8">AtTHA8</shortName>
    </recommendedName>
    <alternativeName>
        <fullName evidence="6">Protein EMBRYO DEFECTIVE 3123</fullName>
    </alternativeName>
</protein>
<organism>
    <name type="scientific">Arabidopsis thaliana</name>
    <name type="common">Mouse-ear cress</name>
    <dbReference type="NCBI Taxonomy" id="3702"/>
    <lineage>
        <taxon>Eukaryota</taxon>
        <taxon>Viridiplantae</taxon>
        <taxon>Streptophyta</taxon>
        <taxon>Embryophyta</taxon>
        <taxon>Tracheophyta</taxon>
        <taxon>Spermatophyta</taxon>
        <taxon>Magnoliopsida</taxon>
        <taxon>eudicotyledons</taxon>
        <taxon>Gunneridae</taxon>
        <taxon>Pentapetalae</taxon>
        <taxon>rosids</taxon>
        <taxon>malvids</taxon>
        <taxon>Brassicales</taxon>
        <taxon>Brassicaceae</taxon>
        <taxon>Camelineae</taxon>
        <taxon>Arabidopsis</taxon>
    </lineage>
</organism>
<sequence>MALSLSQTRPPSLSHSHTLSVIVPKRTFVSIRCGPRDNRGPLLKGRILSTEAIQSIQSLKRAHRTGVSLSLTLRPLRRLIKSDLISVLRELLRQDYCTLAVHVLSTLRTEYPPLDLVLYADIVNALTRNKEFDEIDRLIGEIDGIDQRSDDKALAKLIRAVVGAERRESVVRVYTLMRESGWGSESWEADEYVAEVLSKGLLRLGEPDLASQVSLKSSILKP</sequence>
<dbReference type="EMBL" id="AB018114">
    <property type="protein sequence ID" value="BAB02699.1"/>
    <property type="molecule type" value="Genomic_DNA"/>
</dbReference>
<dbReference type="EMBL" id="CP002686">
    <property type="protein sequence ID" value="AEE77360.1"/>
    <property type="molecule type" value="Genomic_DNA"/>
</dbReference>
<dbReference type="EMBL" id="AY600581">
    <property type="protein sequence ID" value="AAT68380.1"/>
    <property type="molecule type" value="mRNA"/>
</dbReference>
<dbReference type="EMBL" id="AY924778">
    <property type="protein sequence ID" value="AAX23853.1"/>
    <property type="molecule type" value="Genomic_DNA"/>
</dbReference>
<dbReference type="RefSeq" id="NP_189412.1">
    <property type="nucleotide sequence ID" value="NM_113691.2"/>
</dbReference>
<dbReference type="SMR" id="Q9LVW6"/>
<dbReference type="FunCoup" id="Q9LVW6">
    <property type="interactions" value="744"/>
</dbReference>
<dbReference type="STRING" id="3702.Q9LVW6"/>
<dbReference type="PaxDb" id="3702-AT3G27750.1"/>
<dbReference type="ProteomicsDB" id="246475"/>
<dbReference type="EnsemblPlants" id="AT3G27750.1">
    <property type="protein sequence ID" value="AT3G27750.1"/>
    <property type="gene ID" value="AT3G27750"/>
</dbReference>
<dbReference type="GeneID" id="822397"/>
<dbReference type="Gramene" id="AT3G27750.1">
    <property type="protein sequence ID" value="AT3G27750.1"/>
    <property type="gene ID" value="AT3G27750"/>
</dbReference>
<dbReference type="KEGG" id="ath:AT3G27750"/>
<dbReference type="Araport" id="AT3G27750"/>
<dbReference type="TAIR" id="AT3G27750">
    <property type="gene designation" value="EMB3123"/>
</dbReference>
<dbReference type="eggNOG" id="ENOG502RXN7">
    <property type="taxonomic scope" value="Eukaryota"/>
</dbReference>
<dbReference type="HOGENOM" id="CLU_081958_2_0_1"/>
<dbReference type="InParanoid" id="Q9LVW6"/>
<dbReference type="OMA" id="VRIYGMM"/>
<dbReference type="PhylomeDB" id="Q9LVW6"/>
<dbReference type="PRO" id="PR:Q9LVW6"/>
<dbReference type="Proteomes" id="UP000006548">
    <property type="component" value="Chromosome 3"/>
</dbReference>
<dbReference type="ExpressionAtlas" id="Q9LVW6">
    <property type="expression patterns" value="baseline and differential"/>
</dbReference>
<dbReference type="GO" id="GO:0009507">
    <property type="term" value="C:chloroplast"/>
    <property type="evidence" value="ECO:0000314"/>
    <property type="project" value="TAIR"/>
</dbReference>
<dbReference type="GO" id="GO:0009535">
    <property type="term" value="C:chloroplast thylakoid membrane"/>
    <property type="evidence" value="ECO:0007669"/>
    <property type="project" value="UniProtKB-SubCell"/>
</dbReference>
<dbReference type="GO" id="GO:0003723">
    <property type="term" value="F:RNA binding"/>
    <property type="evidence" value="ECO:0000314"/>
    <property type="project" value="TAIR"/>
</dbReference>
<dbReference type="GO" id="GO:1990825">
    <property type="term" value="F:sequence-specific mRNA binding"/>
    <property type="evidence" value="ECO:0000314"/>
    <property type="project" value="UniProtKB"/>
</dbReference>
<dbReference type="GO" id="GO:0003727">
    <property type="term" value="F:single-stranded RNA binding"/>
    <property type="evidence" value="ECO:0000250"/>
    <property type="project" value="UniProtKB"/>
</dbReference>
<dbReference type="GO" id="GO:0009658">
    <property type="term" value="P:chloroplast organization"/>
    <property type="evidence" value="ECO:0000315"/>
    <property type="project" value="TAIR"/>
</dbReference>
<dbReference type="GO" id="GO:0009793">
    <property type="term" value="P:embryo development ending in seed dormancy"/>
    <property type="evidence" value="ECO:0000315"/>
    <property type="project" value="UniProtKB"/>
</dbReference>
<dbReference type="GO" id="GO:0000373">
    <property type="term" value="P:Group II intron splicing"/>
    <property type="evidence" value="ECO:0000315"/>
    <property type="project" value="TAIR"/>
</dbReference>
<dbReference type="GO" id="GO:0006397">
    <property type="term" value="P:mRNA processing"/>
    <property type="evidence" value="ECO:0007669"/>
    <property type="project" value="UniProtKB-KW"/>
</dbReference>
<dbReference type="FunFam" id="1.25.40.10:FF:002233">
    <property type="entry name" value="Protein THYLAKOID ASSEMBLY 8, chloroplastic"/>
    <property type="match status" value="1"/>
</dbReference>
<dbReference type="Gene3D" id="1.25.40.10">
    <property type="entry name" value="Tetratricopeptide repeat domain"/>
    <property type="match status" value="1"/>
</dbReference>
<dbReference type="InterPro" id="IPR044190">
    <property type="entry name" value="THA8-like"/>
</dbReference>
<dbReference type="InterPro" id="IPR011990">
    <property type="entry name" value="TPR-like_helical_dom_sf"/>
</dbReference>
<dbReference type="PANTHER" id="PTHR47594">
    <property type="entry name" value="PPR CONTAINING PLANT-LIKE PROTEIN"/>
    <property type="match status" value="1"/>
</dbReference>
<dbReference type="PANTHER" id="PTHR47594:SF3">
    <property type="entry name" value="PROTEIN THYLAKOID ASSEMBLY 8, CHLOROPLASTIC"/>
    <property type="match status" value="1"/>
</dbReference>
<accession>Q9LVW6</accession>
<proteinExistence type="evidence at transcript level"/>